<comment type="function">
    <text evidence="1">Promotes RNA polymerase assembly. Latches the N- and C-terminal regions of the beta' subunit thereby facilitating its interaction with the beta and alpha subunits.</text>
</comment>
<comment type="catalytic activity">
    <reaction evidence="1">
        <text>RNA(n) + a ribonucleoside 5'-triphosphate = RNA(n+1) + diphosphate</text>
        <dbReference type="Rhea" id="RHEA:21248"/>
        <dbReference type="Rhea" id="RHEA-COMP:14527"/>
        <dbReference type="Rhea" id="RHEA-COMP:17342"/>
        <dbReference type="ChEBI" id="CHEBI:33019"/>
        <dbReference type="ChEBI" id="CHEBI:61557"/>
        <dbReference type="ChEBI" id="CHEBI:140395"/>
        <dbReference type="EC" id="2.7.7.6"/>
    </reaction>
</comment>
<comment type="subunit">
    <text evidence="1">The RNAP catalytic core consists of 2 alpha, 1 beta, 1 beta' and 1 omega subunit. When a sigma factor is associated with the core the holoenzyme is formed, which can initiate transcription.</text>
</comment>
<comment type="similarity">
    <text evidence="1">Belongs to the RNA polymerase subunit omega family.</text>
</comment>
<organism>
    <name type="scientific">Staphylococcus aureus (strain USA300)</name>
    <dbReference type="NCBI Taxonomy" id="367830"/>
    <lineage>
        <taxon>Bacteria</taxon>
        <taxon>Bacillati</taxon>
        <taxon>Bacillota</taxon>
        <taxon>Bacilli</taxon>
        <taxon>Bacillales</taxon>
        <taxon>Staphylococcaceae</taxon>
        <taxon>Staphylococcus</taxon>
    </lineage>
</organism>
<gene>
    <name evidence="1" type="primary">rpoZ</name>
    <name type="ordered locus">SAUSA300_1103</name>
</gene>
<name>RPOZ_STAA3</name>
<reference key="1">
    <citation type="journal article" date="2006" name="Lancet">
        <title>Complete genome sequence of USA300, an epidemic clone of community-acquired meticillin-resistant Staphylococcus aureus.</title>
        <authorList>
            <person name="Diep B.A."/>
            <person name="Gill S.R."/>
            <person name="Chang R.F."/>
            <person name="Phan T.H."/>
            <person name="Chen J.H."/>
            <person name="Davidson M.G."/>
            <person name="Lin F."/>
            <person name="Lin J."/>
            <person name="Carleton H.A."/>
            <person name="Mongodin E.F."/>
            <person name="Sensabaugh G.F."/>
            <person name="Perdreau-Remington F."/>
        </authorList>
    </citation>
    <scope>NUCLEOTIDE SEQUENCE [LARGE SCALE GENOMIC DNA]</scope>
    <source>
        <strain>USA300</strain>
    </source>
</reference>
<accession>Q2FHM8</accession>
<feature type="chain" id="PRO_0000237510" description="DNA-directed RNA polymerase subunit omega">
    <location>
        <begin position="1"/>
        <end position="72"/>
    </location>
</feature>
<proteinExistence type="inferred from homology"/>
<dbReference type="EC" id="2.7.7.6" evidence="1"/>
<dbReference type="EMBL" id="CP000255">
    <property type="protein sequence ID" value="ABD21891.1"/>
    <property type="molecule type" value="Genomic_DNA"/>
</dbReference>
<dbReference type="RefSeq" id="WP_000933956.1">
    <property type="nucleotide sequence ID" value="NZ_CP027476.1"/>
</dbReference>
<dbReference type="SMR" id="Q2FHM8"/>
<dbReference type="KEGG" id="saa:SAUSA300_1103"/>
<dbReference type="HOGENOM" id="CLU_125406_6_0_9"/>
<dbReference type="OMA" id="YHSAKPV"/>
<dbReference type="Proteomes" id="UP000001939">
    <property type="component" value="Chromosome"/>
</dbReference>
<dbReference type="GO" id="GO:0000428">
    <property type="term" value="C:DNA-directed RNA polymerase complex"/>
    <property type="evidence" value="ECO:0007669"/>
    <property type="project" value="UniProtKB-KW"/>
</dbReference>
<dbReference type="GO" id="GO:0003677">
    <property type="term" value="F:DNA binding"/>
    <property type="evidence" value="ECO:0007669"/>
    <property type="project" value="UniProtKB-UniRule"/>
</dbReference>
<dbReference type="GO" id="GO:0003899">
    <property type="term" value="F:DNA-directed RNA polymerase activity"/>
    <property type="evidence" value="ECO:0007669"/>
    <property type="project" value="UniProtKB-UniRule"/>
</dbReference>
<dbReference type="GO" id="GO:0006351">
    <property type="term" value="P:DNA-templated transcription"/>
    <property type="evidence" value="ECO:0007669"/>
    <property type="project" value="UniProtKB-UniRule"/>
</dbReference>
<dbReference type="Gene3D" id="3.90.940.10">
    <property type="match status" value="1"/>
</dbReference>
<dbReference type="HAMAP" id="MF_00366">
    <property type="entry name" value="RNApol_bact_RpoZ"/>
    <property type="match status" value="1"/>
</dbReference>
<dbReference type="InterPro" id="IPR003716">
    <property type="entry name" value="DNA-dir_RNA_pol_omega"/>
</dbReference>
<dbReference type="InterPro" id="IPR006110">
    <property type="entry name" value="Pol_omega/Rpo6/RPB6"/>
</dbReference>
<dbReference type="InterPro" id="IPR036161">
    <property type="entry name" value="RPB6/omega-like_sf"/>
</dbReference>
<dbReference type="NCBIfam" id="TIGR00690">
    <property type="entry name" value="rpoZ"/>
    <property type="match status" value="1"/>
</dbReference>
<dbReference type="PANTHER" id="PTHR34476">
    <property type="entry name" value="DNA-DIRECTED RNA POLYMERASE SUBUNIT OMEGA"/>
    <property type="match status" value="1"/>
</dbReference>
<dbReference type="PANTHER" id="PTHR34476:SF1">
    <property type="entry name" value="DNA-DIRECTED RNA POLYMERASE SUBUNIT OMEGA"/>
    <property type="match status" value="1"/>
</dbReference>
<dbReference type="Pfam" id="PF01192">
    <property type="entry name" value="RNA_pol_Rpb6"/>
    <property type="match status" value="1"/>
</dbReference>
<dbReference type="SMART" id="SM01409">
    <property type="entry name" value="RNA_pol_Rpb6"/>
    <property type="match status" value="1"/>
</dbReference>
<dbReference type="SUPFAM" id="SSF63562">
    <property type="entry name" value="RPB6/omega subunit-like"/>
    <property type="match status" value="1"/>
</dbReference>
<keyword id="KW-0240">DNA-directed RNA polymerase</keyword>
<keyword id="KW-0548">Nucleotidyltransferase</keyword>
<keyword id="KW-0804">Transcription</keyword>
<keyword id="KW-0808">Transferase</keyword>
<protein>
    <recommendedName>
        <fullName evidence="1">DNA-directed RNA polymerase subunit omega</fullName>
        <shortName evidence="1">RNAP omega subunit</shortName>
        <ecNumber evidence="1">2.7.7.6</ecNumber>
    </recommendedName>
    <alternativeName>
        <fullName evidence="1">RNA polymerase omega subunit</fullName>
    </alternativeName>
    <alternativeName>
        <fullName evidence="1">Transcriptase subunit omega</fullName>
    </alternativeName>
</protein>
<sequence>MLNPPLNQLTSQIKSKYLIATTAAKRAREIDEQPETELLSEYHSFKPVGRALEEIADGKIRPVISSDYYGKE</sequence>
<evidence type="ECO:0000255" key="1">
    <source>
        <dbReference type="HAMAP-Rule" id="MF_00366"/>
    </source>
</evidence>